<feature type="chain" id="PRO_0000108191" description="Uncharacterized transporter HI_0687">
    <location>
        <begin position="1"/>
        <end position="304"/>
    </location>
</feature>
<feature type="transmembrane region" description="Helical" evidence="1">
    <location>
        <begin position="9"/>
        <end position="29"/>
    </location>
</feature>
<feature type="transmembrane region" description="Helical" evidence="1">
    <location>
        <begin position="67"/>
        <end position="87"/>
    </location>
</feature>
<feature type="transmembrane region" description="Helical" evidence="1">
    <location>
        <begin position="100"/>
        <end position="120"/>
    </location>
</feature>
<feature type="transmembrane region" description="Helical" evidence="1">
    <location>
        <begin position="131"/>
        <end position="151"/>
    </location>
</feature>
<feature type="transmembrane region" description="Helical" evidence="1">
    <location>
        <begin position="159"/>
        <end position="179"/>
    </location>
</feature>
<feature type="transmembrane region" description="Helical" evidence="1">
    <location>
        <begin position="189"/>
        <end position="209"/>
    </location>
</feature>
<feature type="transmembrane region" description="Helical" evidence="1">
    <location>
        <begin position="222"/>
        <end position="242"/>
    </location>
</feature>
<feature type="transmembrane region" description="Helical" evidence="1">
    <location>
        <begin position="252"/>
        <end position="272"/>
    </location>
</feature>
<feature type="transmembrane region" description="Helical" evidence="1">
    <location>
        <begin position="278"/>
        <end position="298"/>
    </location>
</feature>
<feature type="domain" description="EamA 1">
    <location>
        <begin position="13"/>
        <end position="148"/>
    </location>
</feature>
<feature type="domain" description="EamA 2">
    <location>
        <begin position="171"/>
        <end position="298"/>
    </location>
</feature>
<accession>P71356</accession>
<reference key="1">
    <citation type="journal article" date="1995" name="Science">
        <title>Whole-genome random sequencing and assembly of Haemophilus influenzae Rd.</title>
        <authorList>
            <person name="Fleischmann R.D."/>
            <person name="Adams M.D."/>
            <person name="White O."/>
            <person name="Clayton R.A."/>
            <person name="Kirkness E.F."/>
            <person name="Kerlavage A.R."/>
            <person name="Bult C.J."/>
            <person name="Tomb J.-F."/>
            <person name="Dougherty B.A."/>
            <person name="Merrick J.M."/>
            <person name="McKenney K."/>
            <person name="Sutton G.G."/>
            <person name="FitzHugh W."/>
            <person name="Fields C.A."/>
            <person name="Gocayne J.D."/>
            <person name="Scott J.D."/>
            <person name="Shirley R."/>
            <person name="Liu L.-I."/>
            <person name="Glodek A."/>
            <person name="Kelley J.M."/>
            <person name="Weidman J.F."/>
            <person name="Phillips C.A."/>
            <person name="Spriggs T."/>
            <person name="Hedblom E."/>
            <person name="Cotton M.D."/>
            <person name="Utterback T.R."/>
            <person name="Hanna M.C."/>
            <person name="Nguyen D.T."/>
            <person name="Saudek D.M."/>
            <person name="Brandon R.C."/>
            <person name="Fine L.D."/>
            <person name="Fritchman J.L."/>
            <person name="Fuhrmann J.L."/>
            <person name="Geoghagen N.S.M."/>
            <person name="Gnehm C.L."/>
            <person name="McDonald L.A."/>
            <person name="Small K.V."/>
            <person name="Fraser C.M."/>
            <person name="Smith H.O."/>
            <person name="Venter J.C."/>
        </authorList>
    </citation>
    <scope>NUCLEOTIDE SEQUENCE [LARGE SCALE GENOMIC DNA]</scope>
    <source>
        <strain>ATCC 51907 / DSM 11121 / KW20 / Rd</strain>
    </source>
</reference>
<evidence type="ECO:0000255" key="1"/>
<evidence type="ECO:0000305" key="2"/>
<sequence>MNNENMVRVFYVLLMGLGFPIMRFMSIHFETLNNNSVRFLSGGSLFVIICLIKFRSELKKIIGEPKIILYLFIYLFILGIFMTGNMFFFINGLKYTSALAGSIFGILAMPLAIIIAGIFFKDERDRIRQKEFYIGELLAIIGSLIFVINSSNNDGNTDFFLGAIFLFTAIFIQSVQNLIVKKVAKKINAVVISASTATISGVLFLCLAFNTKQIYLLQDVGIGMLIGLVCAGFYGMLTGMLMAFYIVQKQGITVFNILQLLIPLSTAIIGYLTLDERINIYQGISGIIVIIGCVLALKRKNKEC</sequence>
<name>Y687_HAEIN</name>
<dbReference type="EMBL" id="L42023">
    <property type="protein sequence ID" value="AAC22347.1"/>
    <property type="molecule type" value="Genomic_DNA"/>
</dbReference>
<dbReference type="PIR" id="H64156">
    <property type="entry name" value="H64156"/>
</dbReference>
<dbReference type="RefSeq" id="NP_438847.1">
    <property type="nucleotide sequence ID" value="NC_000907.1"/>
</dbReference>
<dbReference type="SMR" id="P71356"/>
<dbReference type="STRING" id="71421.HI_0687"/>
<dbReference type="EnsemblBacteria" id="AAC22347">
    <property type="protein sequence ID" value="AAC22347"/>
    <property type="gene ID" value="HI_0687"/>
</dbReference>
<dbReference type="KEGG" id="hin:HI_0687"/>
<dbReference type="PATRIC" id="fig|71421.8.peg.718"/>
<dbReference type="eggNOG" id="COG0697">
    <property type="taxonomic scope" value="Bacteria"/>
</dbReference>
<dbReference type="HOGENOM" id="CLU_1011207_0_0_6"/>
<dbReference type="OrthoDB" id="5689580at2"/>
<dbReference type="BioCyc" id="HINF71421:G1GJ1-722-MONOMER"/>
<dbReference type="Proteomes" id="UP000000579">
    <property type="component" value="Chromosome"/>
</dbReference>
<dbReference type="GO" id="GO:0005886">
    <property type="term" value="C:plasma membrane"/>
    <property type="evidence" value="ECO:0007669"/>
    <property type="project" value="UniProtKB-SubCell"/>
</dbReference>
<dbReference type="InterPro" id="IPR050638">
    <property type="entry name" value="AA-Vitamin_Transporters"/>
</dbReference>
<dbReference type="InterPro" id="IPR000620">
    <property type="entry name" value="EamA_dom"/>
</dbReference>
<dbReference type="PANTHER" id="PTHR32322">
    <property type="entry name" value="INNER MEMBRANE TRANSPORTER"/>
    <property type="match status" value="1"/>
</dbReference>
<dbReference type="PANTHER" id="PTHR32322:SF18">
    <property type="entry name" value="S-ADENOSYLMETHIONINE_S-ADENOSYLHOMOCYSTEINE TRANSPORTER"/>
    <property type="match status" value="1"/>
</dbReference>
<dbReference type="Pfam" id="PF00892">
    <property type="entry name" value="EamA"/>
    <property type="match status" value="2"/>
</dbReference>
<dbReference type="SUPFAM" id="SSF103481">
    <property type="entry name" value="Multidrug resistance efflux transporter EmrE"/>
    <property type="match status" value="2"/>
</dbReference>
<protein>
    <recommendedName>
        <fullName>Uncharacterized transporter HI_0687</fullName>
    </recommendedName>
</protein>
<comment type="subcellular location">
    <subcellularLocation>
        <location evidence="2">Cell membrane</location>
        <topology evidence="2">Multi-pass membrane protein</topology>
    </subcellularLocation>
</comment>
<comment type="similarity">
    <text evidence="2">Belongs to the EamA transporter family.</text>
</comment>
<organism>
    <name type="scientific">Haemophilus influenzae (strain ATCC 51907 / DSM 11121 / KW20 / Rd)</name>
    <dbReference type="NCBI Taxonomy" id="71421"/>
    <lineage>
        <taxon>Bacteria</taxon>
        <taxon>Pseudomonadati</taxon>
        <taxon>Pseudomonadota</taxon>
        <taxon>Gammaproteobacteria</taxon>
        <taxon>Pasteurellales</taxon>
        <taxon>Pasteurellaceae</taxon>
        <taxon>Haemophilus</taxon>
    </lineage>
</organism>
<gene>
    <name type="ordered locus">HI_0687</name>
</gene>
<proteinExistence type="inferred from homology"/>
<keyword id="KW-1003">Cell membrane</keyword>
<keyword id="KW-0472">Membrane</keyword>
<keyword id="KW-1185">Reference proteome</keyword>
<keyword id="KW-0677">Repeat</keyword>
<keyword id="KW-0812">Transmembrane</keyword>
<keyword id="KW-1133">Transmembrane helix</keyword>
<keyword id="KW-0813">Transport</keyword>